<accession>P85614</accession>
<comment type="function">
    <text evidence="4">Mediates visceral muscle contractile activity (myotropic activity).</text>
</comment>
<comment type="subcellular location">
    <subcellularLocation>
        <location evidence="4">Secreted</location>
    </subcellularLocation>
</comment>
<comment type="similarity">
    <text evidence="1">Belongs to the periviscerokinin family.</text>
</comment>
<keyword id="KW-0027">Amidation</keyword>
<keyword id="KW-0903">Direct protein sequencing</keyword>
<keyword id="KW-0527">Neuropeptide</keyword>
<keyword id="KW-0964">Secreted</keyword>
<reference evidence="4" key="1">
    <citation type="journal article" date="2009" name="BMC Evol. Biol.">
        <title>A proteomic approach for studying insect phylogeny: CAPA peptides of ancient insect taxa (Dictyoptera, Blattoptera) as a test case.</title>
        <authorList>
            <person name="Roth S."/>
            <person name="Fromm B."/>
            <person name="Gaede G."/>
            <person name="Predel R."/>
        </authorList>
    </citation>
    <scope>PROTEIN SEQUENCE</scope>
    <scope>AMIDATION AT THR-11</scope>
    <source>
        <tissue evidence="2">Abdominal perisympathetic organs</tissue>
    </source>
</reference>
<feature type="peptide" id="PRO_0000378740" description="Periviscerokinin-1" evidence="2">
    <location>
        <begin position="1"/>
        <end position="11"/>
    </location>
</feature>
<feature type="modified residue" description="Threonine amide" evidence="2">
    <location>
        <position position="11"/>
    </location>
</feature>
<name>PVK1_EUBDI</name>
<organism>
    <name type="scientific">Eublaberus distanti</name>
    <name type="common">Four-spotted cockroach</name>
    <dbReference type="NCBI Taxonomy" id="424761"/>
    <lineage>
        <taxon>Eukaryota</taxon>
        <taxon>Metazoa</taxon>
        <taxon>Ecdysozoa</taxon>
        <taxon>Arthropoda</taxon>
        <taxon>Hexapoda</taxon>
        <taxon>Insecta</taxon>
        <taxon>Pterygota</taxon>
        <taxon>Neoptera</taxon>
        <taxon>Polyneoptera</taxon>
        <taxon>Dictyoptera</taxon>
        <taxon>Blattodea</taxon>
        <taxon>Blaberoidea</taxon>
        <taxon>Blaberidae</taxon>
        <taxon>Blaberinae</taxon>
        <taxon>Eublaberus</taxon>
    </lineage>
</organism>
<proteinExistence type="evidence at protein level"/>
<dbReference type="GO" id="GO:0005576">
    <property type="term" value="C:extracellular region"/>
    <property type="evidence" value="ECO:0007669"/>
    <property type="project" value="UniProtKB-SubCell"/>
</dbReference>
<dbReference type="GO" id="GO:0007218">
    <property type="term" value="P:neuropeptide signaling pathway"/>
    <property type="evidence" value="ECO:0007669"/>
    <property type="project" value="UniProtKB-KW"/>
</dbReference>
<dbReference type="InterPro" id="IPR013231">
    <property type="entry name" value="Periviscerokinin"/>
</dbReference>
<dbReference type="Pfam" id="PF08259">
    <property type="entry name" value="Periviscerokin"/>
    <property type="match status" value="1"/>
</dbReference>
<evidence type="ECO:0000255" key="1"/>
<evidence type="ECO:0000269" key="2">
    <source>
    </source>
</evidence>
<evidence type="ECO:0000303" key="3">
    <source>
    </source>
</evidence>
<evidence type="ECO:0000305" key="4"/>
<sequence length="11" mass="1091">GSSGLIPFGRT</sequence>
<protein>
    <recommendedName>
        <fullName evidence="3">Periviscerokinin-1</fullName>
        <shortName evidence="3">EubDi-PVK-1</shortName>
    </recommendedName>
</protein>